<proteinExistence type="evidence at transcript level"/>
<comment type="function">
    <text>Involved in the presentation of foreign antigens to the immune system.</text>
</comment>
<comment type="subunit">
    <text>Heterodimer of an alpha chain and a beta chain (beta-2-microglobulin).</text>
</comment>
<comment type="subcellular location">
    <subcellularLocation>
        <location>Membrane</location>
        <topology>Single-pass type I membrane protein</topology>
    </subcellularLocation>
</comment>
<comment type="similarity">
    <text evidence="7">Belongs to the MHC class I family.</text>
</comment>
<organism>
    <name type="scientific">Pongo pygmaeus</name>
    <name type="common">Bornean orangutan</name>
    <dbReference type="NCBI Taxonomy" id="9600"/>
    <lineage>
        <taxon>Eukaryota</taxon>
        <taxon>Metazoa</taxon>
        <taxon>Chordata</taxon>
        <taxon>Craniata</taxon>
        <taxon>Vertebrata</taxon>
        <taxon>Euteleostomi</taxon>
        <taxon>Mammalia</taxon>
        <taxon>Eutheria</taxon>
        <taxon>Euarchontoglires</taxon>
        <taxon>Primates</taxon>
        <taxon>Haplorrhini</taxon>
        <taxon>Catarrhini</taxon>
        <taxon>Hominidae</taxon>
        <taxon>Pongo</taxon>
    </lineage>
</organism>
<reference key="1">
    <citation type="journal article" date="1990" name="Immunol. Rev.">
        <title>Comparison of class I MHC alleles in humans and apes.</title>
        <authorList>
            <person name="Lawlor D.A."/>
            <person name="Warren E."/>
            <person name="Ward F.E."/>
            <person name="Parham P."/>
        </authorList>
    </citation>
    <scope>NUCLEOTIDE SEQUENCE [MRNA]</scope>
</reference>
<dbReference type="EMBL" id="M30680">
    <property type="protein sequence ID" value="AAA88835.1"/>
    <property type="molecule type" value="mRNA"/>
</dbReference>
<dbReference type="PIR" id="I84432">
    <property type="entry name" value="I84432"/>
</dbReference>
<dbReference type="SMR" id="P16211"/>
<dbReference type="GO" id="GO:0031901">
    <property type="term" value="C:early endosome membrane"/>
    <property type="evidence" value="ECO:0007669"/>
    <property type="project" value="UniProtKB-ARBA"/>
</dbReference>
<dbReference type="GO" id="GO:0012507">
    <property type="term" value="C:ER to Golgi transport vesicle membrane"/>
    <property type="evidence" value="ECO:0007669"/>
    <property type="project" value="UniProtKB-ARBA"/>
</dbReference>
<dbReference type="GO" id="GO:0009897">
    <property type="term" value="C:external side of plasma membrane"/>
    <property type="evidence" value="ECO:0007669"/>
    <property type="project" value="TreeGrafter"/>
</dbReference>
<dbReference type="GO" id="GO:0005615">
    <property type="term" value="C:extracellular space"/>
    <property type="evidence" value="ECO:0007669"/>
    <property type="project" value="TreeGrafter"/>
</dbReference>
<dbReference type="GO" id="GO:0098553">
    <property type="term" value="C:lumenal side of endoplasmic reticulum membrane"/>
    <property type="evidence" value="ECO:0007669"/>
    <property type="project" value="UniProtKB-ARBA"/>
</dbReference>
<dbReference type="GO" id="GO:0042612">
    <property type="term" value="C:MHC class I protein complex"/>
    <property type="evidence" value="ECO:0007669"/>
    <property type="project" value="UniProtKB-KW"/>
</dbReference>
<dbReference type="GO" id="GO:0030670">
    <property type="term" value="C:phagocytic vesicle membrane"/>
    <property type="evidence" value="ECO:0007669"/>
    <property type="project" value="UniProtKB-ARBA"/>
</dbReference>
<dbReference type="GO" id="GO:0055038">
    <property type="term" value="C:recycling endosome membrane"/>
    <property type="evidence" value="ECO:0007669"/>
    <property type="project" value="UniProtKB-ARBA"/>
</dbReference>
<dbReference type="GO" id="GO:0042605">
    <property type="term" value="F:peptide antigen binding"/>
    <property type="evidence" value="ECO:0007669"/>
    <property type="project" value="TreeGrafter"/>
</dbReference>
<dbReference type="GO" id="GO:0005102">
    <property type="term" value="F:signaling receptor binding"/>
    <property type="evidence" value="ECO:0007669"/>
    <property type="project" value="TreeGrafter"/>
</dbReference>
<dbReference type="GO" id="GO:0002486">
    <property type="term" value="P:antigen processing and presentation of endogenous peptide antigen via MHC class I via ER pathway, TAP-independent"/>
    <property type="evidence" value="ECO:0007669"/>
    <property type="project" value="TreeGrafter"/>
</dbReference>
<dbReference type="GO" id="GO:0002476">
    <property type="term" value="P:antigen processing and presentation of endogenous peptide antigen via MHC class Ib"/>
    <property type="evidence" value="ECO:0007669"/>
    <property type="project" value="TreeGrafter"/>
</dbReference>
<dbReference type="GO" id="GO:0006955">
    <property type="term" value="P:immune response"/>
    <property type="evidence" value="ECO:0007669"/>
    <property type="project" value="InterPro"/>
</dbReference>
<dbReference type="GO" id="GO:0001916">
    <property type="term" value="P:positive regulation of T cell mediated cytotoxicity"/>
    <property type="evidence" value="ECO:0007669"/>
    <property type="project" value="TreeGrafter"/>
</dbReference>
<dbReference type="CDD" id="cd07698">
    <property type="entry name" value="IgC1_MHC_I_alpha3"/>
    <property type="match status" value="1"/>
</dbReference>
<dbReference type="FunFam" id="2.60.40.10:FF:000014">
    <property type="entry name" value="H-2 class I histocompatibility antigen, alpha chain"/>
    <property type="match status" value="1"/>
</dbReference>
<dbReference type="FunFam" id="3.30.500.10:FF:000001">
    <property type="entry name" value="H-2 class I histocompatibility antigen, alpha chain"/>
    <property type="match status" value="1"/>
</dbReference>
<dbReference type="Gene3D" id="2.60.40.10">
    <property type="entry name" value="Immunoglobulins"/>
    <property type="match status" value="1"/>
</dbReference>
<dbReference type="Gene3D" id="3.30.500.10">
    <property type="entry name" value="MHC class I-like antigen recognition-like"/>
    <property type="match status" value="1"/>
</dbReference>
<dbReference type="InterPro" id="IPR007110">
    <property type="entry name" value="Ig-like_dom"/>
</dbReference>
<dbReference type="InterPro" id="IPR036179">
    <property type="entry name" value="Ig-like_dom_sf"/>
</dbReference>
<dbReference type="InterPro" id="IPR013783">
    <property type="entry name" value="Ig-like_fold"/>
</dbReference>
<dbReference type="InterPro" id="IPR003006">
    <property type="entry name" value="Ig/MHC_CS"/>
</dbReference>
<dbReference type="InterPro" id="IPR003597">
    <property type="entry name" value="Ig_C1-set"/>
</dbReference>
<dbReference type="InterPro" id="IPR050208">
    <property type="entry name" value="MHC_class-I_related"/>
</dbReference>
<dbReference type="InterPro" id="IPR011161">
    <property type="entry name" value="MHC_I-like_Ag-recog"/>
</dbReference>
<dbReference type="InterPro" id="IPR037055">
    <property type="entry name" value="MHC_I-like_Ag-recog_sf"/>
</dbReference>
<dbReference type="InterPro" id="IPR011162">
    <property type="entry name" value="MHC_I/II-like_Ag-recog"/>
</dbReference>
<dbReference type="InterPro" id="IPR001039">
    <property type="entry name" value="MHC_I_a_a1/a2"/>
</dbReference>
<dbReference type="InterPro" id="IPR010579">
    <property type="entry name" value="MHC_I_a_C"/>
</dbReference>
<dbReference type="PANTHER" id="PTHR16675:SF229">
    <property type="entry name" value="HLA CLASS I HISTOCOMPATIBILITY ANTIGEN, A ALPHA CHAIN"/>
    <property type="match status" value="1"/>
</dbReference>
<dbReference type="PANTHER" id="PTHR16675">
    <property type="entry name" value="MHC CLASS I-RELATED"/>
    <property type="match status" value="1"/>
</dbReference>
<dbReference type="Pfam" id="PF07654">
    <property type="entry name" value="C1-set"/>
    <property type="match status" value="1"/>
</dbReference>
<dbReference type="Pfam" id="PF00129">
    <property type="entry name" value="MHC_I"/>
    <property type="match status" value="1"/>
</dbReference>
<dbReference type="Pfam" id="PF06623">
    <property type="entry name" value="MHC_I_C"/>
    <property type="match status" value="1"/>
</dbReference>
<dbReference type="PRINTS" id="PR01638">
    <property type="entry name" value="MHCCLASSI"/>
</dbReference>
<dbReference type="SMART" id="SM00407">
    <property type="entry name" value="IGc1"/>
    <property type="match status" value="1"/>
</dbReference>
<dbReference type="SUPFAM" id="SSF48726">
    <property type="entry name" value="Immunoglobulin"/>
    <property type="match status" value="1"/>
</dbReference>
<dbReference type="SUPFAM" id="SSF54452">
    <property type="entry name" value="MHC antigen-recognition domain"/>
    <property type="match status" value="1"/>
</dbReference>
<dbReference type="PROSITE" id="PS50835">
    <property type="entry name" value="IG_LIKE"/>
    <property type="match status" value="1"/>
</dbReference>
<dbReference type="PROSITE" id="PS00290">
    <property type="entry name" value="IG_MHC"/>
    <property type="match status" value="1"/>
</dbReference>
<feature type="signal peptide" evidence="1">
    <location>
        <begin position="1"/>
        <end position="24"/>
    </location>
</feature>
<feature type="chain" id="PRO_0000018918" description="Popy Class I histocompatibility antigen, A-1 alpha chain">
    <location>
        <begin position="25"/>
        <end position="365"/>
    </location>
</feature>
<feature type="topological domain" description="Extracellular" evidence="4">
    <location>
        <begin position="25"/>
        <end position="308"/>
    </location>
</feature>
<feature type="transmembrane region" description="Helical" evidence="4">
    <location>
        <begin position="309"/>
        <end position="332"/>
    </location>
</feature>
<feature type="topological domain" description="Cytoplasmic" evidence="4">
    <location>
        <begin position="333"/>
        <end position="365"/>
    </location>
</feature>
<feature type="domain" description="Ig-like C1-type">
    <location>
        <begin position="209"/>
        <end position="297"/>
    </location>
</feature>
<feature type="region of interest" description="Alpha-1">
    <location>
        <begin position="25"/>
        <end position="114"/>
    </location>
</feature>
<feature type="region of interest" description="Alpha-2">
    <location>
        <begin position="115"/>
        <end position="206"/>
    </location>
</feature>
<feature type="region of interest" description="Alpha-3">
    <location>
        <begin position="207"/>
        <end position="298"/>
    </location>
</feature>
<feature type="region of interest" description="Connecting peptide">
    <location>
        <begin position="299"/>
        <end position="308"/>
    </location>
</feature>
<feature type="region of interest" description="Disordered" evidence="6">
    <location>
        <begin position="340"/>
        <end position="365"/>
    </location>
</feature>
<feature type="compositionally biased region" description="Polar residues" evidence="6">
    <location>
        <begin position="343"/>
        <end position="359"/>
    </location>
</feature>
<feature type="modified residue" description="Phosphoserine" evidence="2">
    <location>
        <position position="343"/>
    </location>
</feature>
<feature type="modified residue" description="Phosphotyrosine" evidence="2">
    <location>
        <position position="344"/>
    </location>
</feature>
<feature type="modified residue" description="Phosphoserine" evidence="2">
    <location>
        <position position="345"/>
    </location>
</feature>
<feature type="modified residue" description="Phosphoserine" evidence="2">
    <location>
        <position position="349"/>
    </location>
</feature>
<feature type="modified residue" description="Phosphoserine" evidence="3">
    <location>
        <position position="352"/>
    </location>
</feature>
<feature type="modified residue" description="Phosphoserine" evidence="3">
    <location>
        <position position="356"/>
    </location>
</feature>
<feature type="modified residue" description="Phosphoserine" evidence="3">
    <location>
        <position position="359"/>
    </location>
</feature>
<feature type="glycosylation site" description="N-linked (GlcNAc...) asparagine" evidence="1">
    <location>
        <position position="110"/>
    </location>
</feature>
<feature type="disulfide bond" evidence="5">
    <location>
        <begin position="125"/>
        <end position="188"/>
    </location>
</feature>
<feature type="disulfide bond" evidence="5">
    <location>
        <begin position="227"/>
        <end position="283"/>
    </location>
</feature>
<accession>P16211</accession>
<evidence type="ECO:0000250" key="1"/>
<evidence type="ECO:0000250" key="2">
    <source>
        <dbReference type="UniProtKB" id="P18462"/>
    </source>
</evidence>
<evidence type="ECO:0000250" key="3">
    <source>
        <dbReference type="UniProtKB" id="P30443"/>
    </source>
</evidence>
<evidence type="ECO:0000255" key="4"/>
<evidence type="ECO:0000255" key="5">
    <source>
        <dbReference type="PROSITE-ProRule" id="PRU00114"/>
    </source>
</evidence>
<evidence type="ECO:0000256" key="6">
    <source>
        <dbReference type="SAM" id="MobiDB-lite"/>
    </source>
</evidence>
<evidence type="ECO:0000305" key="7"/>
<protein>
    <recommendedName>
        <fullName>Popy Class I histocompatibility antigen, A-1 alpha chain</fullName>
    </recommendedName>
    <alternativeName>
        <fullName>Class I histocompatibility antigen, A-1 alpha chain</fullName>
    </alternativeName>
</protein>
<keyword id="KW-1015">Disulfide bond</keyword>
<keyword id="KW-0325">Glycoprotein</keyword>
<keyword id="KW-0391">Immunity</keyword>
<keyword id="KW-0472">Membrane</keyword>
<keyword id="KW-0490">MHC I</keyword>
<keyword id="KW-0597">Phosphoprotein</keyword>
<keyword id="KW-0732">Signal</keyword>
<keyword id="KW-0812">Transmembrane</keyword>
<keyword id="KW-1133">Transmembrane helix</keyword>
<sequence length="365" mass="40658">MAIMAPRTLLLLLSGALALTQTWAGSHSMRYFSTSVSRPGRGEPRFIAVGYVDDTQFVRFDSDAASQRMEPRTPWMEQEGPEYWDRETRSVKAHAQTNRVDLGTLRGYYNQSDGGSHTIQRMFGCDVGPDGRFLRGYEQHAYDGKDYIALNEDLRSWTAADMAAQITQRKWEAAGAAEQDRAYLEGLCVESLRRYLENGKETLQRTDAPKTHMTHHPVSDHEATLRCWALGFYPAEITLTWQRDGEDQTQDTELVETRPAGDGTFQKWAAVVVPSGKEQRYTCHVQHEGLPEPLTLRWELSSQPTIPIVGIIAGLVLLGAVITGAVVAAVMWRRRNSDRKGGSYSQAASNDSAQGSDVSLTACKV</sequence>
<name>1A01_PONPY</name>